<feature type="chain" id="PRO_0000280160" description="Macrolide export ATP-binding/permease protein MacB 1">
    <location>
        <begin position="1"/>
        <end position="648"/>
    </location>
</feature>
<feature type="transmembrane region" description="Helical" evidence="1">
    <location>
        <begin position="273"/>
        <end position="293"/>
    </location>
</feature>
<feature type="transmembrane region" description="Helical" evidence="1">
    <location>
        <begin position="521"/>
        <end position="541"/>
    </location>
</feature>
<feature type="transmembrane region" description="Helical" evidence="1">
    <location>
        <begin position="578"/>
        <end position="598"/>
    </location>
</feature>
<feature type="transmembrane region" description="Helical" evidence="1">
    <location>
        <begin position="613"/>
        <end position="633"/>
    </location>
</feature>
<feature type="domain" description="ABC transporter" evidence="1">
    <location>
        <begin position="6"/>
        <end position="244"/>
    </location>
</feature>
<feature type="region of interest" description="Disordered" evidence="2">
    <location>
        <begin position="222"/>
        <end position="248"/>
    </location>
</feature>
<feature type="binding site" evidence="1">
    <location>
        <begin position="42"/>
        <end position="49"/>
    </location>
    <ligand>
        <name>ATP</name>
        <dbReference type="ChEBI" id="CHEBI:30616"/>
    </ligand>
</feature>
<sequence length="648" mass="69008">MREPLLQLSGIRRHFGDGERRVEVLKGIDLTIARGEMVAIVGASGSGKSTLLNILGCLDQPSEGSYRVAGRETSRLTADALATLRREHFGFIFQRYHLLGDLSARDNVALPALYAGLAGDARKARAERLLQRLGLGSRLDYKPSQLSGGQQQRVSIARALINGGQVILADEPTGALDSQSGAEVLGILGALHRQGHTLVLVTHDMAIAEQAERIIELKDGAVVADRRREPTPPSPAPTTSRADTGGRGGLAGRLGAAFKMALLAMRAQRMRTFLTMLGIIIGIAAVVSVVALGRGSQQQVLANINAMGTSTLEIFPGSGFGDRRAEAVQTLRVEDAEALAGLGYVHSVTPSLATSVTLRRGSQAVLGSVNGVGEQFFQVRGYRLLQGMLFDAASVTALAQEVVIDENSLARLFGAGESPLGQVILLGSLPCRVIGVVARNQSGFGSDENLNVWIPHTTAMTRMLGQSHLRSISVRVQDEVALAAAEDGISRLLRERHGAQDFFVLNTDSIRQAITSTNATLTLLIAMIALISLVVGGIGVMNIMLVSVSERTREIGVRMAVGARTGDILQQFLIEAVLVCLLGGAAGVLLSLLIGVLFEHFSSQFTLSYSLDAVLMAFFCSSLIGVLFGFFPARRAARMDPIHALERE</sequence>
<gene>
    <name evidence="1" type="primary">macB1</name>
    <name type="ordered locus">AHA_0761</name>
</gene>
<proteinExistence type="inferred from homology"/>
<evidence type="ECO:0000255" key="1">
    <source>
        <dbReference type="HAMAP-Rule" id="MF_01720"/>
    </source>
</evidence>
<evidence type="ECO:0000256" key="2">
    <source>
        <dbReference type="SAM" id="MobiDB-lite"/>
    </source>
</evidence>
<reference key="1">
    <citation type="journal article" date="2006" name="J. Bacteriol.">
        <title>Genome sequence of Aeromonas hydrophila ATCC 7966T: jack of all trades.</title>
        <authorList>
            <person name="Seshadri R."/>
            <person name="Joseph S.W."/>
            <person name="Chopra A.K."/>
            <person name="Sha J."/>
            <person name="Shaw J."/>
            <person name="Graf J."/>
            <person name="Haft D.H."/>
            <person name="Wu M."/>
            <person name="Ren Q."/>
            <person name="Rosovitz M.J."/>
            <person name="Madupu R."/>
            <person name="Tallon L."/>
            <person name="Kim M."/>
            <person name="Jin S."/>
            <person name="Vuong H."/>
            <person name="Stine O.C."/>
            <person name="Ali A."/>
            <person name="Horneman A.J."/>
            <person name="Heidelberg J.F."/>
        </authorList>
    </citation>
    <scope>NUCLEOTIDE SEQUENCE [LARGE SCALE GENOMIC DNA]</scope>
    <source>
        <strain>ATCC 7966 / DSM 30187 / BCRC 13018 / CCUG 14551 / JCM 1027 / KCTC 2358 / NCIMB 9240 / NCTC 8049</strain>
    </source>
</reference>
<protein>
    <recommendedName>
        <fullName evidence="1">Macrolide export ATP-binding/permease protein MacB 1</fullName>
        <ecNumber evidence="1">7.6.2.-</ecNumber>
    </recommendedName>
</protein>
<keyword id="KW-0046">Antibiotic resistance</keyword>
<keyword id="KW-0067">ATP-binding</keyword>
<keyword id="KW-0997">Cell inner membrane</keyword>
<keyword id="KW-1003">Cell membrane</keyword>
<keyword id="KW-0472">Membrane</keyword>
<keyword id="KW-0547">Nucleotide-binding</keyword>
<keyword id="KW-1185">Reference proteome</keyword>
<keyword id="KW-1278">Translocase</keyword>
<keyword id="KW-0812">Transmembrane</keyword>
<keyword id="KW-1133">Transmembrane helix</keyword>
<keyword id="KW-0813">Transport</keyword>
<dbReference type="EC" id="7.6.2.-" evidence="1"/>
<dbReference type="EMBL" id="CP000462">
    <property type="protein sequence ID" value="ABK38211.1"/>
    <property type="molecule type" value="Genomic_DNA"/>
</dbReference>
<dbReference type="RefSeq" id="WP_011704712.1">
    <property type="nucleotide sequence ID" value="NC_008570.1"/>
</dbReference>
<dbReference type="RefSeq" id="YP_855302.1">
    <property type="nucleotide sequence ID" value="NC_008570.1"/>
</dbReference>
<dbReference type="SMR" id="A0KGB3"/>
<dbReference type="STRING" id="380703.AHA_0761"/>
<dbReference type="EnsemblBacteria" id="ABK38211">
    <property type="protein sequence ID" value="ABK38211"/>
    <property type="gene ID" value="AHA_0761"/>
</dbReference>
<dbReference type="GeneID" id="4488114"/>
<dbReference type="KEGG" id="aha:AHA_0761"/>
<dbReference type="PATRIC" id="fig|380703.7.peg.759"/>
<dbReference type="eggNOG" id="COG0577">
    <property type="taxonomic scope" value="Bacteria"/>
</dbReference>
<dbReference type="eggNOG" id="COG1136">
    <property type="taxonomic scope" value="Bacteria"/>
</dbReference>
<dbReference type="HOGENOM" id="CLU_000604_78_2_6"/>
<dbReference type="OrthoDB" id="9770036at2"/>
<dbReference type="Proteomes" id="UP000000756">
    <property type="component" value="Chromosome"/>
</dbReference>
<dbReference type="GO" id="GO:0005886">
    <property type="term" value="C:plasma membrane"/>
    <property type="evidence" value="ECO:0007669"/>
    <property type="project" value="UniProtKB-SubCell"/>
</dbReference>
<dbReference type="GO" id="GO:0005524">
    <property type="term" value="F:ATP binding"/>
    <property type="evidence" value="ECO:0007669"/>
    <property type="project" value="UniProtKB-KW"/>
</dbReference>
<dbReference type="GO" id="GO:0016887">
    <property type="term" value="F:ATP hydrolysis activity"/>
    <property type="evidence" value="ECO:0007669"/>
    <property type="project" value="InterPro"/>
</dbReference>
<dbReference type="GO" id="GO:0022857">
    <property type="term" value="F:transmembrane transporter activity"/>
    <property type="evidence" value="ECO:0007669"/>
    <property type="project" value="TreeGrafter"/>
</dbReference>
<dbReference type="GO" id="GO:0046677">
    <property type="term" value="P:response to antibiotic"/>
    <property type="evidence" value="ECO:0007669"/>
    <property type="project" value="UniProtKB-KW"/>
</dbReference>
<dbReference type="CDD" id="cd03255">
    <property type="entry name" value="ABC_MJ0796_LolCDE_FtsE"/>
    <property type="match status" value="1"/>
</dbReference>
<dbReference type="FunFam" id="3.40.50.300:FF:000032">
    <property type="entry name" value="Export ABC transporter ATP-binding protein"/>
    <property type="match status" value="1"/>
</dbReference>
<dbReference type="Gene3D" id="3.40.50.300">
    <property type="entry name" value="P-loop containing nucleotide triphosphate hydrolases"/>
    <property type="match status" value="1"/>
</dbReference>
<dbReference type="InterPro" id="IPR003593">
    <property type="entry name" value="AAA+_ATPase"/>
</dbReference>
<dbReference type="InterPro" id="IPR003838">
    <property type="entry name" value="ABC3_permease_C"/>
</dbReference>
<dbReference type="InterPro" id="IPR003439">
    <property type="entry name" value="ABC_transporter-like_ATP-bd"/>
</dbReference>
<dbReference type="InterPro" id="IPR017871">
    <property type="entry name" value="ABC_transporter-like_CS"/>
</dbReference>
<dbReference type="InterPro" id="IPR017911">
    <property type="entry name" value="MacB-like_ATP-bd"/>
</dbReference>
<dbReference type="InterPro" id="IPR025857">
    <property type="entry name" value="MacB_PCD"/>
</dbReference>
<dbReference type="InterPro" id="IPR050250">
    <property type="entry name" value="Macrolide_Exporter_MacB"/>
</dbReference>
<dbReference type="InterPro" id="IPR027417">
    <property type="entry name" value="P-loop_NTPase"/>
</dbReference>
<dbReference type="PANTHER" id="PTHR30572:SF14">
    <property type="entry name" value="MACROLIDE EXPORT ATP-BINDING_PERMEASE PROTEIN MACB"/>
    <property type="match status" value="1"/>
</dbReference>
<dbReference type="PANTHER" id="PTHR30572">
    <property type="entry name" value="MEMBRANE COMPONENT OF TRANSPORTER-RELATED"/>
    <property type="match status" value="1"/>
</dbReference>
<dbReference type="Pfam" id="PF00005">
    <property type="entry name" value="ABC_tran"/>
    <property type="match status" value="1"/>
</dbReference>
<dbReference type="Pfam" id="PF02687">
    <property type="entry name" value="FtsX"/>
    <property type="match status" value="1"/>
</dbReference>
<dbReference type="Pfam" id="PF12704">
    <property type="entry name" value="MacB_PCD"/>
    <property type="match status" value="1"/>
</dbReference>
<dbReference type="SMART" id="SM00382">
    <property type="entry name" value="AAA"/>
    <property type="match status" value="1"/>
</dbReference>
<dbReference type="SUPFAM" id="SSF52540">
    <property type="entry name" value="P-loop containing nucleoside triphosphate hydrolases"/>
    <property type="match status" value="1"/>
</dbReference>
<dbReference type="PROSITE" id="PS00211">
    <property type="entry name" value="ABC_TRANSPORTER_1"/>
    <property type="match status" value="1"/>
</dbReference>
<dbReference type="PROSITE" id="PS50893">
    <property type="entry name" value="ABC_TRANSPORTER_2"/>
    <property type="match status" value="1"/>
</dbReference>
<dbReference type="PROSITE" id="PS51267">
    <property type="entry name" value="MACB"/>
    <property type="match status" value="1"/>
</dbReference>
<accession>A0KGB3</accession>
<comment type="function">
    <text evidence="1">Part of the tripartite efflux system MacAB-TolC. MacB is a non-canonical ABC transporter that contains transmembrane domains (TMD), which form a pore in the inner membrane, and an ATP-binding domain (NBD), which is responsible for energy generation. Confers resistance against macrolides.</text>
</comment>
<comment type="subunit">
    <text evidence="1">Homodimer. Part of the tripartite efflux system MacAB-TolC, which is composed of an inner membrane transporter, MacB, a periplasmic membrane fusion protein, MacA, and an outer membrane component, TolC. The complex forms a large protein conduit and can translocate molecules across both the inner and outer membranes. Interacts with MacA.</text>
</comment>
<comment type="subcellular location">
    <subcellularLocation>
        <location evidence="1">Cell inner membrane</location>
        <topology evidence="1">Multi-pass membrane protein</topology>
    </subcellularLocation>
</comment>
<comment type="similarity">
    <text evidence="1">Belongs to the ABC transporter superfamily. Macrolide exporter (TC 3.A.1.122) family.</text>
</comment>
<organism>
    <name type="scientific">Aeromonas hydrophila subsp. hydrophila (strain ATCC 7966 / DSM 30187 / BCRC 13018 / CCUG 14551 / JCM 1027 / KCTC 2358 / NCIMB 9240 / NCTC 8049)</name>
    <dbReference type="NCBI Taxonomy" id="380703"/>
    <lineage>
        <taxon>Bacteria</taxon>
        <taxon>Pseudomonadati</taxon>
        <taxon>Pseudomonadota</taxon>
        <taxon>Gammaproteobacteria</taxon>
        <taxon>Aeromonadales</taxon>
        <taxon>Aeromonadaceae</taxon>
        <taxon>Aeromonas</taxon>
    </lineage>
</organism>
<name>MACB1_AERHH</name>